<keyword id="KW-0333">Golgi apparatus</keyword>
<keyword id="KW-0472">Membrane</keyword>
<keyword id="KW-0653">Protein transport</keyword>
<keyword id="KW-1185">Reference proteome</keyword>
<keyword id="KW-0813">Transport</keyword>
<reference key="1">
    <citation type="journal article" date="1997" name="Nature">
        <title>The nucleotide sequence of Saccharomyces cerevisiae chromosome XV.</title>
        <authorList>
            <person name="Dujon B."/>
            <person name="Albermann K."/>
            <person name="Aldea M."/>
            <person name="Alexandraki D."/>
            <person name="Ansorge W."/>
            <person name="Arino J."/>
            <person name="Benes V."/>
            <person name="Bohn C."/>
            <person name="Bolotin-Fukuhara M."/>
            <person name="Bordonne R."/>
            <person name="Boyer J."/>
            <person name="Camasses A."/>
            <person name="Casamayor A."/>
            <person name="Casas C."/>
            <person name="Cheret G."/>
            <person name="Cziepluch C."/>
            <person name="Daignan-Fornier B."/>
            <person name="Dang V.-D."/>
            <person name="de Haan M."/>
            <person name="Delius H."/>
            <person name="Durand P."/>
            <person name="Fairhead C."/>
            <person name="Feldmann H."/>
            <person name="Gaillon L."/>
            <person name="Galisson F."/>
            <person name="Gamo F.-J."/>
            <person name="Gancedo C."/>
            <person name="Goffeau A."/>
            <person name="Goulding S.E."/>
            <person name="Grivell L.A."/>
            <person name="Habbig B."/>
            <person name="Hand N.J."/>
            <person name="Hani J."/>
            <person name="Hattenhorst U."/>
            <person name="Hebling U."/>
            <person name="Hernando Y."/>
            <person name="Herrero E."/>
            <person name="Heumann K."/>
            <person name="Hiesel R."/>
            <person name="Hilger F."/>
            <person name="Hofmann B."/>
            <person name="Hollenberg C.P."/>
            <person name="Hughes B."/>
            <person name="Jauniaux J.-C."/>
            <person name="Kalogeropoulos A."/>
            <person name="Katsoulou C."/>
            <person name="Kordes E."/>
            <person name="Lafuente M.J."/>
            <person name="Landt O."/>
            <person name="Louis E.J."/>
            <person name="Maarse A.C."/>
            <person name="Madania A."/>
            <person name="Mannhaupt G."/>
            <person name="Marck C."/>
            <person name="Martin R.P."/>
            <person name="Mewes H.-W."/>
            <person name="Michaux G."/>
            <person name="Paces V."/>
            <person name="Parle-McDermott A.G."/>
            <person name="Pearson B.M."/>
            <person name="Perrin A."/>
            <person name="Pettersson B."/>
            <person name="Poch O."/>
            <person name="Pohl T.M."/>
            <person name="Poirey R."/>
            <person name="Portetelle D."/>
            <person name="Pujol A."/>
            <person name="Purnelle B."/>
            <person name="Ramezani Rad M."/>
            <person name="Rechmann S."/>
            <person name="Schwager C."/>
            <person name="Schweizer M."/>
            <person name="Sor F."/>
            <person name="Sterky F."/>
            <person name="Tarassov I.A."/>
            <person name="Teodoru C."/>
            <person name="Tettelin H."/>
            <person name="Thierry A."/>
            <person name="Tobiasch E."/>
            <person name="Tzermia M."/>
            <person name="Uhlen M."/>
            <person name="Unseld M."/>
            <person name="Valens M."/>
            <person name="Vandenbol M."/>
            <person name="Vetter I."/>
            <person name="Vlcek C."/>
            <person name="Voet M."/>
            <person name="Volckaert G."/>
            <person name="Voss H."/>
            <person name="Wambutt R."/>
            <person name="Wedler H."/>
            <person name="Wiemann S."/>
            <person name="Winsor B."/>
            <person name="Wolfe K.H."/>
            <person name="Zollner A."/>
            <person name="Zumstein E."/>
            <person name="Kleine K."/>
        </authorList>
    </citation>
    <scope>NUCLEOTIDE SEQUENCE [LARGE SCALE GENOMIC DNA]</scope>
    <source>
        <strain>ATCC 204508 / S288c</strain>
    </source>
</reference>
<reference key="2">
    <citation type="journal article" date="2014" name="G3 (Bethesda)">
        <title>The reference genome sequence of Saccharomyces cerevisiae: Then and now.</title>
        <authorList>
            <person name="Engel S.R."/>
            <person name="Dietrich F.S."/>
            <person name="Fisk D.G."/>
            <person name="Binkley G."/>
            <person name="Balakrishnan R."/>
            <person name="Costanzo M.C."/>
            <person name="Dwight S.S."/>
            <person name="Hitz B.C."/>
            <person name="Karra K."/>
            <person name="Nash R.S."/>
            <person name="Weng S."/>
            <person name="Wong E.D."/>
            <person name="Lloyd P."/>
            <person name="Skrzypek M.S."/>
            <person name="Miyasato S.R."/>
            <person name="Simison M."/>
            <person name="Cherry J.M."/>
        </authorList>
    </citation>
    <scope>GENOME REANNOTATION</scope>
    <source>
        <strain>ATCC 204508 / S288c</strain>
    </source>
</reference>
<reference key="3">
    <citation type="journal article" date="2001" name="Mol. Biol. Cell">
        <title>A genomic study of the bipolar bud site selection pattern in Saccharomyces cerevisiae.</title>
        <authorList>
            <person name="Ni L."/>
            <person name="Snyder M."/>
        </authorList>
    </citation>
    <scope>FUNCTION</scope>
</reference>
<reference key="4">
    <citation type="journal article" date="2003" name="Nature">
        <title>Global analysis of protein localization in budding yeast.</title>
        <authorList>
            <person name="Huh W.-K."/>
            <person name="Falvo J.V."/>
            <person name="Gerke L.C."/>
            <person name="Carroll A.S."/>
            <person name="Howson R.W."/>
            <person name="Weissman J.S."/>
            <person name="O'Shea E.K."/>
        </authorList>
    </citation>
    <scope>SUBCELLULAR LOCATION [LARGE SCALE ANALYSIS]</scope>
</reference>
<reference key="5">
    <citation type="journal article" date="2003" name="Nature">
        <title>Global analysis of protein expression in yeast.</title>
        <authorList>
            <person name="Ghaemmaghami S."/>
            <person name="Huh W.-K."/>
            <person name="Bower K."/>
            <person name="Howson R.W."/>
            <person name="Belle A."/>
            <person name="Dephoure N."/>
            <person name="O'Shea E.K."/>
            <person name="Weissman J.S."/>
        </authorList>
    </citation>
    <scope>LEVEL OF PROTEIN EXPRESSION [LARGE SCALE ANALYSIS]</scope>
</reference>
<reference key="6">
    <citation type="journal article" date="2006" name="EMBO J.">
        <title>Arf1p, Chs5p and the ChAPs are required for export of specialized cargo from the Golgi.</title>
        <authorList>
            <person name="Trautwein M."/>
            <person name="Schindler C."/>
            <person name="Gauss R."/>
            <person name="Dengjel J."/>
            <person name="Hartmann E."/>
            <person name="Spang A."/>
        </authorList>
    </citation>
    <scope>FUNCTION</scope>
    <scope>SUBCELLULAR LOCATION</scope>
    <scope>INTERACTION WITH ARF1; BCH1; BCH2; CHS3; CHS5 AND CHS6</scope>
    <scope>DOMAIN</scope>
</reference>
<reference key="7">
    <citation type="journal article" date="2006" name="J. Cell Biol.">
        <title>Exomer: a coat complex for transport of select membrane proteins from the trans-Golgi network to the plasma membrane in yeast.</title>
        <authorList>
            <person name="Wang C.-W."/>
            <person name="Hamamoto S."/>
            <person name="Orci L."/>
            <person name="Schekman R."/>
        </authorList>
    </citation>
    <scope>FUNCTION</scope>
    <scope>IDENTIFICATION IN THE CHS5/6 COMPLEX</scope>
    <scope>INTERACTION WITH ARF1</scope>
    <scope>SUBCELLULAR LOCATION</scope>
</reference>
<reference key="8">
    <citation type="journal article" date="2006" name="Mol. Biol. Cell">
        <title>Chs5/6 complex: a multiprotein complex that interacts with and conveys chitin synthase III from the trans-Golgi network to the cell surface.</title>
        <authorList>
            <person name="Sanchatjate S."/>
            <person name="Schekman R."/>
        </authorList>
    </citation>
    <scope>FUNCTION</scope>
    <scope>IDENTIFICATION IN THE CHS5/6 COMPLEX</scope>
    <scope>INTERACTION WITH CHS3</scope>
</reference>
<reference key="9">
    <citation type="journal article" date="2009" name="Science">
        <title>Global analysis of Cdk1 substrate phosphorylation sites provides insights into evolution.</title>
        <authorList>
            <person name="Holt L.J."/>
            <person name="Tuch B.B."/>
            <person name="Villen J."/>
            <person name="Johnson A.D."/>
            <person name="Gygi S.P."/>
            <person name="Morgan D.O."/>
        </authorList>
    </citation>
    <scope>IDENTIFICATION BY MASS SPECTROMETRY [LARGE SCALE ANALYSIS]</scope>
</reference>
<dbReference type="EMBL" id="Z75207">
    <property type="protein sequence ID" value="CAA99528.1"/>
    <property type="molecule type" value="Genomic_DNA"/>
</dbReference>
<dbReference type="EMBL" id="BK006948">
    <property type="protein sequence ID" value="DAA11065.1"/>
    <property type="molecule type" value="Genomic_DNA"/>
</dbReference>
<dbReference type="PIR" id="S67203">
    <property type="entry name" value="S67203"/>
</dbReference>
<dbReference type="RefSeq" id="NP_014943.1">
    <property type="nucleotide sequence ID" value="NM_001183718.1"/>
</dbReference>
<dbReference type="SMR" id="Q08754"/>
<dbReference type="BioGRID" id="34688">
    <property type="interactions" value="99"/>
</dbReference>
<dbReference type="ComplexPortal" id="CPX-1719">
    <property type="entry name" value="Exomer complex"/>
</dbReference>
<dbReference type="DIP" id="DIP-2692N"/>
<dbReference type="FunCoup" id="Q08754">
    <property type="interactions" value="121"/>
</dbReference>
<dbReference type="IntAct" id="Q08754">
    <property type="interactions" value="20"/>
</dbReference>
<dbReference type="MINT" id="Q08754"/>
<dbReference type="STRING" id="4932.YOR299W"/>
<dbReference type="iPTMnet" id="Q08754"/>
<dbReference type="PaxDb" id="4932-YOR299W"/>
<dbReference type="PeptideAtlas" id="Q08754"/>
<dbReference type="EnsemblFungi" id="YOR299W_mRNA">
    <property type="protein sequence ID" value="YOR299W"/>
    <property type="gene ID" value="YOR299W"/>
</dbReference>
<dbReference type="GeneID" id="854475"/>
<dbReference type="KEGG" id="sce:YOR299W"/>
<dbReference type="AGR" id="SGD:S000005825"/>
<dbReference type="SGD" id="S000005825">
    <property type="gene designation" value="BUD7"/>
</dbReference>
<dbReference type="VEuPathDB" id="FungiDB:YOR299W"/>
<dbReference type="eggNOG" id="ENOG502QSKI">
    <property type="taxonomic scope" value="Eukaryota"/>
</dbReference>
<dbReference type="GeneTree" id="ENSGT00940000176338"/>
<dbReference type="HOGENOM" id="CLU_019711_0_0_1"/>
<dbReference type="InParanoid" id="Q08754"/>
<dbReference type="OMA" id="CINERQR"/>
<dbReference type="OrthoDB" id="434695at2759"/>
<dbReference type="BioCyc" id="YEAST:G3O-33784-MONOMER"/>
<dbReference type="BioGRID-ORCS" id="854475">
    <property type="hits" value="7 hits in 10 CRISPR screens"/>
</dbReference>
<dbReference type="PRO" id="PR:Q08754"/>
<dbReference type="Proteomes" id="UP000002311">
    <property type="component" value="Chromosome XV"/>
</dbReference>
<dbReference type="RNAct" id="Q08754">
    <property type="molecule type" value="protein"/>
</dbReference>
<dbReference type="GO" id="GO:0034044">
    <property type="term" value="C:exomer complex"/>
    <property type="evidence" value="ECO:0000314"/>
    <property type="project" value="SGD"/>
</dbReference>
<dbReference type="GO" id="GO:0016020">
    <property type="term" value="C:membrane"/>
    <property type="evidence" value="ECO:0007669"/>
    <property type="project" value="UniProtKB-KW"/>
</dbReference>
<dbReference type="GO" id="GO:0030140">
    <property type="term" value="C:trans-Golgi network transport vesicle"/>
    <property type="evidence" value="ECO:0000314"/>
    <property type="project" value="SGD"/>
</dbReference>
<dbReference type="GO" id="GO:0000282">
    <property type="term" value="P:cellular bud site selection"/>
    <property type="evidence" value="ECO:0000315"/>
    <property type="project" value="SGD"/>
</dbReference>
<dbReference type="GO" id="GO:0006031">
    <property type="term" value="P:chitin biosynthetic process"/>
    <property type="evidence" value="ECO:0000353"/>
    <property type="project" value="SGD"/>
</dbReference>
<dbReference type="GO" id="GO:0006893">
    <property type="term" value="P:Golgi to plasma membrane transport"/>
    <property type="evidence" value="ECO:0000316"/>
    <property type="project" value="SGD"/>
</dbReference>
<dbReference type="GO" id="GO:0015031">
    <property type="term" value="P:protein transport"/>
    <property type="evidence" value="ECO:0000303"/>
    <property type="project" value="ComplexPortal"/>
</dbReference>
<dbReference type="FunFam" id="1.25.40.10:FF:000476">
    <property type="entry name" value="Bud site selection protein"/>
    <property type="match status" value="1"/>
</dbReference>
<dbReference type="Gene3D" id="1.25.40.10">
    <property type="entry name" value="Tetratricopeptide repeat domain"/>
    <property type="match status" value="1"/>
</dbReference>
<dbReference type="InterPro" id="IPR015374">
    <property type="entry name" value="ChAPs"/>
</dbReference>
<dbReference type="InterPro" id="IPR011990">
    <property type="entry name" value="TPR-like_helical_dom_sf"/>
</dbReference>
<dbReference type="PANTHER" id="PTHR31975">
    <property type="entry name" value="BUD SITE SELECTION PROTEIN 7-RELATED"/>
    <property type="match status" value="1"/>
</dbReference>
<dbReference type="PANTHER" id="PTHR31975:SF1">
    <property type="entry name" value="BUD SITE SELECTION PROTEIN 7-RELATED"/>
    <property type="match status" value="1"/>
</dbReference>
<dbReference type="Pfam" id="PF09295">
    <property type="entry name" value="ChAPs"/>
    <property type="match status" value="1"/>
</dbReference>
<dbReference type="SUPFAM" id="SSF48452">
    <property type="entry name" value="TPR-like"/>
    <property type="match status" value="1"/>
</dbReference>
<accession>Q08754</accession>
<accession>D6W2Z9</accession>
<organism>
    <name type="scientific">Saccharomyces cerevisiae (strain ATCC 204508 / S288c)</name>
    <name type="common">Baker's yeast</name>
    <dbReference type="NCBI Taxonomy" id="559292"/>
    <lineage>
        <taxon>Eukaryota</taxon>
        <taxon>Fungi</taxon>
        <taxon>Dikarya</taxon>
        <taxon>Ascomycota</taxon>
        <taxon>Saccharomycotina</taxon>
        <taxon>Saccharomycetes</taxon>
        <taxon>Saccharomycetales</taxon>
        <taxon>Saccharomycetaceae</taxon>
        <taxon>Saccharomyces</taxon>
    </lineage>
</organism>
<gene>
    <name type="primary">BUD7</name>
    <name type="ordered locus">YOR299W</name>
</gene>
<name>BUD7_YEAST</name>
<evidence type="ECO:0000269" key="1">
    <source>
    </source>
</evidence>
<evidence type="ECO:0000269" key="2">
    <source>
    </source>
</evidence>
<evidence type="ECO:0000269" key="3">
    <source>
    </source>
</evidence>
<evidence type="ECO:0000269" key="4">
    <source>
    </source>
</evidence>
<evidence type="ECO:0000269" key="5">
    <source>
    </source>
</evidence>
<evidence type="ECO:0000269" key="6">
    <source>
    </source>
</evidence>
<evidence type="ECO:0000305" key="7"/>
<proteinExistence type="evidence at protein level"/>
<comment type="function">
    <text evidence="1 4 5 6">Member of the CHS5-ARF1P-binding proteins (CHAPS) which mediates export of specific cargo proteins, including chitin synthase CHS3. May be involved in positioning the proximal bud pole signal.</text>
</comment>
<comment type="subunit">
    <text evidence="4 5 6">Component of the CHS5/6 complex composed of the 4 CHAPS proteins BCH1, BCH2v, BUD7, and CHS6 as well as at least CHS5 and GTP-bound ARF1. The complex interacts with the cargo protein CHS3.</text>
</comment>
<comment type="interaction">
    <interactant intactId="EBI-32770">
        <id>Q08754</id>
    </interactant>
    <interactant intactId="EBI-2816">
        <id>P11076</id>
        <label>ARF1</label>
    </interactant>
    <organismsDiffer>false</organismsDiffer>
    <experiments>2</experiments>
</comment>
<comment type="interaction">
    <interactant intactId="EBI-32770">
        <id>Q08754</id>
    </interactant>
    <interactant intactId="EBI-27508">
        <id>Q05029</id>
        <label>BCH1</label>
    </interactant>
    <organismsDiffer>false</organismsDiffer>
    <experiments>6</experiments>
</comment>
<comment type="interaction">
    <interactant intactId="EBI-32770">
        <id>Q08754</id>
    </interactant>
    <interactant intactId="EBI-4640">
        <id>Q12114</id>
        <label>CHS5</label>
    </interactant>
    <organismsDiffer>false</organismsDiffer>
    <experiments>11</experiments>
</comment>
<comment type="interaction">
    <interactant intactId="EBI-32770">
        <id>Q08754</id>
    </interactant>
    <interactant intactId="EBI-4649">
        <id>P40955</id>
        <label>CHS6</label>
    </interactant>
    <organismsDiffer>false</organismsDiffer>
    <experiments>2</experiments>
</comment>
<comment type="subcellular location">
    <subcellularLocation>
        <location evidence="2 4 6">Golgi apparatus</location>
        <location evidence="2 4 6">trans-Golgi network membrane</location>
        <topology evidence="2 4 6">Peripheral membrane protein</topology>
    </subcellularLocation>
    <text>Trans-Golgi network location requires interaction with CHS5 and with myristoylated GTP-bound ARF1 for the recruitment to the membranes.</text>
</comment>
<comment type="miscellaneous">
    <text evidence="3">Present with 2070 molecules/cell in log phase SD medium.</text>
</comment>
<comment type="similarity">
    <text evidence="7">Belongs to the CHAPS family.</text>
</comment>
<sequence>MITQNSIPEVKEDFIGYALHERRIRLPQFQDLGPADLVTLTKYLPTSSNTNAINSTSRNGAAIIQSPAAVVADDSAASMATNGDASDTAVTTNYTNASIYSSSRNANDGAPMVAELHPLDKLKDEVGTFFYSMGVDTSGPTSIAIFLKEISEVISEKPQVWFGRKKTFNVARISFSTWNAFRRCDINVVVHIPGSIQNFIVDCNGESQNIEMCADYDLIWAETFVSGVVRSIMLMKENAEEGELQNLVETLILNPFTAGQIDDVPEMFIDLFPIVYHKGPLLGAPYYITNVTNTNNYLVETLVEIVKLTRNVSRAEIMLKNLATDNPEAIIILIKIFLVCDQELDAIKLTYDMLSQDKIINNTNNRMDYKSELLCLQAQFLIDKRQDYSLAQNIAQEAVNCSPSEFRPWYLLSKVYVKLNDIENALLILNSCPMSPLKEKYVLKRVAPLPSNNSLHLPLPIDVVLDEVTSLNPQDVQNEHRSADPMLVNLAASNLKSTFQLAYRLLTEIVQITGWENLLKYRSNIFVMEEEYQKSSSSLPKDVNKQEEQPLRAKRLCERWLDNLFMLLYEDLKMYTLWQTEQLYMDAQNNNHNKLTFEWELFGLCARRLGHFPEAAKAFQNGLSQRFSSRCARKLLEYCINERQRVKNFINSPNSHDMVPEIVSSRIRELDNSIIDLCVKICCWNHRWYTEFSISLLDCLSVVIQDMSLTKVSNEISSRYPETVLNLVQENLLNFFTTCTIGCYDA</sequence>
<feature type="chain" id="PRO_0000065019" description="Bud site selection protein 7">
    <location>
        <begin position="1"/>
        <end position="746"/>
    </location>
</feature>
<feature type="region of interest" description="CHS5-binding">
    <location>
        <begin position="733"/>
        <end position="746"/>
    </location>
</feature>
<protein>
    <recommendedName>
        <fullName>Bud site selection protein 7</fullName>
    </recommendedName>
</protein>